<name>AGM1_SCHPO</name>
<protein>
    <recommendedName>
        <fullName evidence="1">Phosphoacetylglucosamine mutase 1</fullName>
        <shortName>PAGM</shortName>
        <ecNumber evidence="1">5.4.2.3</ecNumber>
    </recommendedName>
    <alternativeName>
        <fullName evidence="1">Acetylglucosamine phosphomutase</fullName>
    </alternativeName>
    <alternativeName>
        <fullName evidence="1">N-acetylglucosamine-phosphate mutase</fullName>
    </alternativeName>
</protein>
<comment type="function">
    <text evidence="1">Catalyzes the conversion of GlcNAc-6-P into GlcNAc-1-P during the synthesis of uridine diphosphate/UDP-GlcNAc, which is a biosynthetic precursor of chitin and also supplies the amino sugars for N-linked oligosaccharides of glycoproteins.</text>
</comment>
<comment type="catalytic activity">
    <reaction evidence="1">
        <text>N-acetyl-alpha-D-glucosamine 1-phosphate = N-acetyl-D-glucosamine 6-phosphate</text>
        <dbReference type="Rhea" id="RHEA:23804"/>
        <dbReference type="ChEBI" id="CHEBI:57513"/>
        <dbReference type="ChEBI" id="CHEBI:57776"/>
        <dbReference type="EC" id="5.4.2.3"/>
    </reaction>
</comment>
<comment type="cofactor">
    <cofactor evidence="2">
        <name>Mg(2+)</name>
        <dbReference type="ChEBI" id="CHEBI:18420"/>
    </cofactor>
    <text evidence="2">Binds 1 Mg(2+) ion per subunit.</text>
</comment>
<comment type="pathway">
    <text evidence="1">Nucleotide-sugar biosynthesis; UDP-N-acetyl-alpha-D-glucosamine biosynthesis; N-acetyl-alpha-D-glucosamine 1-phosphate from alpha-D-glucosamine 6-phosphate (route I): step 2/2.</text>
</comment>
<comment type="subcellular location">
    <subcellularLocation>
        <location evidence="3">Cytoplasm</location>
    </subcellularLocation>
    <subcellularLocation>
        <location evidence="3">Nucleus</location>
    </subcellularLocation>
</comment>
<comment type="similarity">
    <text evidence="5">Belongs to the phosphohexose mutase family.</text>
</comment>
<keyword id="KW-0119">Carbohydrate metabolism</keyword>
<keyword id="KW-0961">Cell wall biogenesis/degradation</keyword>
<keyword id="KW-0963">Cytoplasm</keyword>
<keyword id="KW-0413">Isomerase</keyword>
<keyword id="KW-0460">Magnesium</keyword>
<keyword id="KW-0479">Metal-binding</keyword>
<keyword id="KW-0539">Nucleus</keyword>
<keyword id="KW-0597">Phosphoprotein</keyword>
<keyword id="KW-1185">Reference proteome</keyword>
<reference key="1">
    <citation type="journal article" date="2002" name="Nature">
        <title>The genome sequence of Schizosaccharomyces pombe.</title>
        <authorList>
            <person name="Wood V."/>
            <person name="Gwilliam R."/>
            <person name="Rajandream M.A."/>
            <person name="Lyne M.H."/>
            <person name="Lyne R."/>
            <person name="Stewart A."/>
            <person name="Sgouros J.G."/>
            <person name="Peat N."/>
            <person name="Hayles J."/>
            <person name="Baker S.G."/>
            <person name="Basham D."/>
            <person name="Bowman S."/>
            <person name="Brooks K."/>
            <person name="Brown D."/>
            <person name="Brown S."/>
            <person name="Chillingworth T."/>
            <person name="Churcher C.M."/>
            <person name="Collins M."/>
            <person name="Connor R."/>
            <person name="Cronin A."/>
            <person name="Davis P."/>
            <person name="Feltwell T."/>
            <person name="Fraser A."/>
            <person name="Gentles S."/>
            <person name="Goble A."/>
            <person name="Hamlin N."/>
            <person name="Harris D.E."/>
            <person name="Hidalgo J."/>
            <person name="Hodgson G."/>
            <person name="Holroyd S."/>
            <person name="Hornsby T."/>
            <person name="Howarth S."/>
            <person name="Huckle E.J."/>
            <person name="Hunt S."/>
            <person name="Jagels K."/>
            <person name="James K.D."/>
            <person name="Jones L."/>
            <person name="Jones M."/>
            <person name="Leather S."/>
            <person name="McDonald S."/>
            <person name="McLean J."/>
            <person name="Mooney P."/>
            <person name="Moule S."/>
            <person name="Mungall K.L."/>
            <person name="Murphy L.D."/>
            <person name="Niblett D."/>
            <person name="Odell C."/>
            <person name="Oliver K."/>
            <person name="O'Neil S."/>
            <person name="Pearson D."/>
            <person name="Quail M.A."/>
            <person name="Rabbinowitsch E."/>
            <person name="Rutherford K.M."/>
            <person name="Rutter S."/>
            <person name="Saunders D."/>
            <person name="Seeger K."/>
            <person name="Sharp S."/>
            <person name="Skelton J."/>
            <person name="Simmonds M.N."/>
            <person name="Squares R."/>
            <person name="Squares S."/>
            <person name="Stevens K."/>
            <person name="Taylor K."/>
            <person name="Taylor R.G."/>
            <person name="Tivey A."/>
            <person name="Walsh S.V."/>
            <person name="Warren T."/>
            <person name="Whitehead S."/>
            <person name="Woodward J.R."/>
            <person name="Volckaert G."/>
            <person name="Aert R."/>
            <person name="Robben J."/>
            <person name="Grymonprez B."/>
            <person name="Weltjens I."/>
            <person name="Vanstreels E."/>
            <person name="Rieger M."/>
            <person name="Schaefer M."/>
            <person name="Mueller-Auer S."/>
            <person name="Gabel C."/>
            <person name="Fuchs M."/>
            <person name="Duesterhoeft A."/>
            <person name="Fritzc C."/>
            <person name="Holzer E."/>
            <person name="Moestl D."/>
            <person name="Hilbert H."/>
            <person name="Borzym K."/>
            <person name="Langer I."/>
            <person name="Beck A."/>
            <person name="Lehrach H."/>
            <person name="Reinhardt R."/>
            <person name="Pohl T.M."/>
            <person name="Eger P."/>
            <person name="Zimmermann W."/>
            <person name="Wedler H."/>
            <person name="Wambutt R."/>
            <person name="Purnelle B."/>
            <person name="Goffeau A."/>
            <person name="Cadieu E."/>
            <person name="Dreano S."/>
            <person name="Gloux S."/>
            <person name="Lelaure V."/>
            <person name="Mottier S."/>
            <person name="Galibert F."/>
            <person name="Aves S.J."/>
            <person name="Xiang Z."/>
            <person name="Hunt C."/>
            <person name="Moore K."/>
            <person name="Hurst S.M."/>
            <person name="Lucas M."/>
            <person name="Rochet M."/>
            <person name="Gaillardin C."/>
            <person name="Tallada V.A."/>
            <person name="Garzon A."/>
            <person name="Thode G."/>
            <person name="Daga R.R."/>
            <person name="Cruzado L."/>
            <person name="Jimenez J."/>
            <person name="Sanchez M."/>
            <person name="del Rey F."/>
            <person name="Benito J."/>
            <person name="Dominguez A."/>
            <person name="Revuelta J.L."/>
            <person name="Moreno S."/>
            <person name="Armstrong J."/>
            <person name="Forsburg S.L."/>
            <person name="Cerutti L."/>
            <person name="Lowe T."/>
            <person name="McCombie W.R."/>
            <person name="Paulsen I."/>
            <person name="Potashkin J."/>
            <person name="Shpakovski G.V."/>
            <person name="Ussery D."/>
            <person name="Barrell B.G."/>
            <person name="Nurse P."/>
        </authorList>
    </citation>
    <scope>NUCLEOTIDE SEQUENCE [LARGE SCALE GENOMIC DNA]</scope>
    <source>
        <strain>972 / ATCC 24843</strain>
    </source>
</reference>
<reference key="2">
    <citation type="journal article" date="2006" name="Nat. Biotechnol.">
        <title>ORFeome cloning and global analysis of protein localization in the fission yeast Schizosaccharomyces pombe.</title>
        <authorList>
            <person name="Matsuyama A."/>
            <person name="Arai R."/>
            <person name="Yashiroda Y."/>
            <person name="Shirai A."/>
            <person name="Kamata A."/>
            <person name="Sekido S."/>
            <person name="Kobayashi Y."/>
            <person name="Hashimoto A."/>
            <person name="Hamamoto M."/>
            <person name="Hiraoka Y."/>
            <person name="Horinouchi S."/>
            <person name="Yoshida M."/>
        </authorList>
    </citation>
    <scope>SUBCELLULAR LOCATION [LARGE SCALE ANALYSIS]</scope>
</reference>
<reference key="3">
    <citation type="journal article" date="2008" name="J. Proteome Res.">
        <title>Phosphoproteome analysis of fission yeast.</title>
        <authorList>
            <person name="Wilson-Grady J.T."/>
            <person name="Villen J."/>
            <person name="Gygi S.P."/>
        </authorList>
    </citation>
    <scope>PHOSPHORYLATION [LARGE SCALE ANALYSIS] AT THR-49 AND SER-51</scope>
    <scope>IDENTIFICATION BY MASS SPECTROMETRY</scope>
</reference>
<evidence type="ECO:0000250" key="1">
    <source>
        <dbReference type="UniProtKB" id="P38628"/>
    </source>
</evidence>
<evidence type="ECO:0000250" key="2">
    <source>
        <dbReference type="UniProtKB" id="Q9P4V2"/>
    </source>
</evidence>
<evidence type="ECO:0000269" key="3">
    <source>
    </source>
</evidence>
<evidence type="ECO:0000269" key="4">
    <source>
    </source>
</evidence>
<evidence type="ECO:0000305" key="5"/>
<evidence type="ECO:0000312" key="6">
    <source>
        <dbReference type="PomBase" id="SPAC13C5.05c"/>
    </source>
</evidence>
<gene>
    <name evidence="6" type="ORF">SPAC13C5.05c</name>
</gene>
<dbReference type="EC" id="5.4.2.3" evidence="1"/>
<dbReference type="EMBL" id="CU329670">
    <property type="protein sequence ID" value="CAA90456.1"/>
    <property type="molecule type" value="Genomic_DNA"/>
</dbReference>
<dbReference type="PIR" id="S59642">
    <property type="entry name" value="S59642"/>
</dbReference>
<dbReference type="RefSeq" id="NP_592933.1">
    <property type="nucleotide sequence ID" value="NM_001018334.2"/>
</dbReference>
<dbReference type="SMR" id="Q09687"/>
<dbReference type="BioGRID" id="278786">
    <property type="interactions" value="2"/>
</dbReference>
<dbReference type="FunCoup" id="Q09687">
    <property type="interactions" value="36"/>
</dbReference>
<dbReference type="STRING" id="284812.Q09687"/>
<dbReference type="iPTMnet" id="Q09687"/>
<dbReference type="PaxDb" id="4896-SPAC13C5.05c.1"/>
<dbReference type="EnsemblFungi" id="SPAC13C5.05c.1">
    <property type="protein sequence ID" value="SPAC13C5.05c.1:pep"/>
    <property type="gene ID" value="SPAC13C5.05c"/>
</dbReference>
<dbReference type="KEGG" id="spo:2542320"/>
<dbReference type="PomBase" id="SPAC13C5.05c"/>
<dbReference type="VEuPathDB" id="FungiDB:SPAC13C5.05c"/>
<dbReference type="eggNOG" id="KOG2537">
    <property type="taxonomic scope" value="Eukaryota"/>
</dbReference>
<dbReference type="HOGENOM" id="CLU_022890_1_0_1"/>
<dbReference type="InParanoid" id="Q09687"/>
<dbReference type="OMA" id="WEAYATK"/>
<dbReference type="PhylomeDB" id="Q09687"/>
<dbReference type="Reactome" id="R-SPO-446210">
    <property type="pathway name" value="Synthesis of UDP-N-acetyl-glucosamine"/>
</dbReference>
<dbReference type="UniPathway" id="UPA00113">
    <property type="reaction ID" value="UER00530"/>
</dbReference>
<dbReference type="PRO" id="PR:Q09687"/>
<dbReference type="Proteomes" id="UP000002485">
    <property type="component" value="Chromosome I"/>
</dbReference>
<dbReference type="GO" id="GO:0005829">
    <property type="term" value="C:cytosol"/>
    <property type="evidence" value="ECO:0007005"/>
    <property type="project" value="PomBase"/>
</dbReference>
<dbReference type="GO" id="GO:0005634">
    <property type="term" value="C:nucleus"/>
    <property type="evidence" value="ECO:0007005"/>
    <property type="project" value="PomBase"/>
</dbReference>
<dbReference type="GO" id="GO:0000287">
    <property type="term" value="F:magnesium ion binding"/>
    <property type="evidence" value="ECO:0007669"/>
    <property type="project" value="InterPro"/>
</dbReference>
<dbReference type="GO" id="GO:0004610">
    <property type="term" value="F:phosphoacetylglucosamine mutase activity"/>
    <property type="evidence" value="ECO:0000318"/>
    <property type="project" value="GO_Central"/>
</dbReference>
<dbReference type="GO" id="GO:0005975">
    <property type="term" value="P:carbohydrate metabolic process"/>
    <property type="evidence" value="ECO:0007669"/>
    <property type="project" value="InterPro"/>
</dbReference>
<dbReference type="GO" id="GO:0071555">
    <property type="term" value="P:cell wall organization"/>
    <property type="evidence" value="ECO:0007669"/>
    <property type="project" value="UniProtKB-KW"/>
</dbReference>
<dbReference type="GO" id="GO:0006031">
    <property type="term" value="P:chitin biosynthetic process"/>
    <property type="evidence" value="ECO:0000318"/>
    <property type="project" value="GO_Central"/>
</dbReference>
<dbReference type="GO" id="GO:0006048">
    <property type="term" value="P:UDP-N-acetylglucosamine biosynthetic process"/>
    <property type="evidence" value="ECO:0000318"/>
    <property type="project" value="GO_Central"/>
</dbReference>
<dbReference type="CDD" id="cd03086">
    <property type="entry name" value="PGM3"/>
    <property type="match status" value="1"/>
</dbReference>
<dbReference type="FunFam" id="3.30.310.50:FF:000003">
    <property type="entry name" value="Phosphoacetylglucosamine mutase"/>
    <property type="match status" value="1"/>
</dbReference>
<dbReference type="FunFam" id="3.40.120.10:FF:000013">
    <property type="entry name" value="Phosphoacetylglucosamine mutase"/>
    <property type="match status" value="1"/>
</dbReference>
<dbReference type="Gene3D" id="3.40.120.10">
    <property type="entry name" value="Alpha-D-Glucose-1,6-Bisphosphate, subunit A, domain 3"/>
    <property type="match status" value="3"/>
</dbReference>
<dbReference type="Gene3D" id="3.30.310.50">
    <property type="entry name" value="Alpha-D-phosphohexomutase, C-terminal domain"/>
    <property type="match status" value="1"/>
</dbReference>
<dbReference type="InterPro" id="IPR005844">
    <property type="entry name" value="A-D-PHexomutase_a/b/a-I"/>
</dbReference>
<dbReference type="InterPro" id="IPR016055">
    <property type="entry name" value="A-D-PHexomutase_a/b/a-I/II/III"/>
</dbReference>
<dbReference type="InterPro" id="IPR005843">
    <property type="entry name" value="A-D-PHexomutase_C"/>
</dbReference>
<dbReference type="InterPro" id="IPR036900">
    <property type="entry name" value="A-D-PHexomutase_C_sf"/>
</dbReference>
<dbReference type="InterPro" id="IPR016066">
    <property type="entry name" value="A-D-PHexomutase_CS"/>
</dbReference>
<dbReference type="InterPro" id="IPR049023">
    <property type="entry name" value="AMG1_II"/>
</dbReference>
<dbReference type="InterPro" id="IPR049022">
    <property type="entry name" value="AMG1_III"/>
</dbReference>
<dbReference type="InterPro" id="IPR016657">
    <property type="entry name" value="PAGM"/>
</dbReference>
<dbReference type="PANTHER" id="PTHR45955">
    <property type="entry name" value="PHOSPHOACETYLGLUCOSAMINE MUTASE"/>
    <property type="match status" value="1"/>
</dbReference>
<dbReference type="PANTHER" id="PTHR45955:SF1">
    <property type="entry name" value="PHOSPHOACETYLGLUCOSAMINE MUTASE"/>
    <property type="match status" value="1"/>
</dbReference>
<dbReference type="Pfam" id="PF21405">
    <property type="entry name" value="AMG1_II"/>
    <property type="match status" value="1"/>
</dbReference>
<dbReference type="Pfam" id="PF21404">
    <property type="entry name" value="AMG1_III"/>
    <property type="match status" value="1"/>
</dbReference>
<dbReference type="Pfam" id="PF02878">
    <property type="entry name" value="PGM_PMM_I"/>
    <property type="match status" value="2"/>
</dbReference>
<dbReference type="Pfam" id="PF00408">
    <property type="entry name" value="PGM_PMM_IV"/>
    <property type="match status" value="1"/>
</dbReference>
<dbReference type="PIRSF" id="PIRSF016408">
    <property type="entry name" value="PAGM"/>
    <property type="match status" value="1"/>
</dbReference>
<dbReference type="SUPFAM" id="SSF55957">
    <property type="entry name" value="Phosphoglucomutase, C-terminal domain"/>
    <property type="match status" value="1"/>
</dbReference>
<dbReference type="SUPFAM" id="SSF53738">
    <property type="entry name" value="Phosphoglucomutase, first 3 domains"/>
    <property type="match status" value="4"/>
</dbReference>
<dbReference type="PROSITE" id="PS00710">
    <property type="entry name" value="PGM_PMM"/>
    <property type="match status" value="1"/>
</dbReference>
<sequence length="518" mass="56347">MTKNKKYSYGTAGFRTKASDLEAAVYSSGVAAALRSMELKGKTIGVMITASHNPVEDNGVKIIDADGGMLAMEWEDKCTQLANAPSKAEFDFLIKQFLTPTTCQPKVIIGYDTRPSSPRLAELLKVCLDEMSASYIDYGYITTPQLHWLVRLINKSTAASFLEEGPPITEYYDTLTSAFSKIDPSMQDSPTVSRVVVDCANGVGSQPLKTVAGLVKDSLSIELVNTDVRASELLNNGCGADFVKTKQSPPLALEGKIKPNQLYASIDGDADRLIFYYINQNRKFHLLDGDKISTALVGYLNILVKKSGMPFSLGVVQTAYANGASTEYLQDLGITTVFTPTGVKHLHKAAKEFDIGVYFEANGHGTVLFSDKALANLAHPFFTPSPVQAAAIEQLQSYSVLINQAIGDAISDLLATISVLNALHWDASAWSNTYKDLPNKLAKVKVSDRTIYKSTDAERRLVSPDGLQEKIDALVAKYEKGRSFVRASGTEDVVRVYAEASTKQAADELCEKVCQLVL</sequence>
<accession>Q09687</accession>
<proteinExistence type="evidence at protein level"/>
<organism>
    <name type="scientific">Schizosaccharomyces pombe (strain 972 / ATCC 24843)</name>
    <name type="common">Fission yeast</name>
    <dbReference type="NCBI Taxonomy" id="284812"/>
    <lineage>
        <taxon>Eukaryota</taxon>
        <taxon>Fungi</taxon>
        <taxon>Dikarya</taxon>
        <taxon>Ascomycota</taxon>
        <taxon>Taphrinomycotina</taxon>
        <taxon>Schizosaccharomycetes</taxon>
        <taxon>Schizosaccharomycetales</taxon>
        <taxon>Schizosaccharomycetaceae</taxon>
        <taxon>Schizosaccharomyces</taxon>
    </lineage>
</organism>
<feature type="chain" id="PRO_0000148017" description="Phosphoacetylglucosamine mutase 1">
    <location>
        <begin position="1"/>
        <end position="518"/>
    </location>
</feature>
<feature type="active site" description="Phosphoserine intermediate" evidence="2">
    <location>
        <position position="51"/>
    </location>
</feature>
<feature type="binding site" description="via phosphate group" evidence="2">
    <location>
        <position position="51"/>
    </location>
    <ligand>
        <name>Mg(2+)</name>
        <dbReference type="ChEBI" id="CHEBI:18420"/>
    </ligand>
</feature>
<feature type="binding site" evidence="2">
    <location>
        <position position="267"/>
    </location>
    <ligand>
        <name>Mg(2+)</name>
        <dbReference type="ChEBI" id="CHEBI:18420"/>
    </ligand>
</feature>
<feature type="binding site" evidence="2">
    <location>
        <position position="269"/>
    </location>
    <ligand>
        <name>Mg(2+)</name>
        <dbReference type="ChEBI" id="CHEBI:18420"/>
    </ligand>
</feature>
<feature type="binding site" evidence="2">
    <location>
        <position position="271"/>
    </location>
    <ligand>
        <name>Mg(2+)</name>
        <dbReference type="ChEBI" id="CHEBI:18420"/>
    </ligand>
</feature>
<feature type="binding site" evidence="2">
    <location>
        <begin position="360"/>
        <end position="362"/>
    </location>
    <ligand>
        <name>substrate</name>
    </ligand>
</feature>
<feature type="binding site" evidence="2">
    <location>
        <begin position="486"/>
        <end position="490"/>
    </location>
    <ligand>
        <name>substrate</name>
    </ligand>
</feature>
<feature type="binding site" evidence="2">
    <location>
        <position position="495"/>
    </location>
    <ligand>
        <name>substrate</name>
    </ligand>
</feature>
<feature type="modified residue" description="Phosphothreonine" evidence="4">
    <location>
        <position position="49"/>
    </location>
</feature>
<feature type="modified residue" description="Phosphoserine" evidence="4">
    <location>
        <position position="51"/>
    </location>
</feature>